<evidence type="ECO:0000255" key="1">
    <source>
        <dbReference type="HAMAP-Rule" id="MF_00558"/>
    </source>
</evidence>
<protein>
    <recommendedName>
        <fullName evidence="1">Succinate--CoA ligase [ADP-forming] subunit beta</fullName>
        <ecNumber evidence="1">6.2.1.5</ecNumber>
    </recommendedName>
    <alternativeName>
        <fullName evidence="1">Succinyl-CoA synthetase subunit beta</fullName>
        <shortName evidence="1">SCS-beta</shortName>
    </alternativeName>
</protein>
<keyword id="KW-0067">ATP-binding</keyword>
<keyword id="KW-0436">Ligase</keyword>
<keyword id="KW-0460">Magnesium</keyword>
<keyword id="KW-0479">Metal-binding</keyword>
<keyword id="KW-0547">Nucleotide-binding</keyword>
<keyword id="KW-0816">Tricarboxylic acid cycle</keyword>
<organism>
    <name type="scientific">Burkholderia lata (strain ATCC 17760 / DSM 23089 / LMG 22485 / NCIMB 9086 / R18194 / 383)</name>
    <dbReference type="NCBI Taxonomy" id="482957"/>
    <lineage>
        <taxon>Bacteria</taxon>
        <taxon>Pseudomonadati</taxon>
        <taxon>Pseudomonadota</taxon>
        <taxon>Betaproteobacteria</taxon>
        <taxon>Burkholderiales</taxon>
        <taxon>Burkholderiaceae</taxon>
        <taxon>Burkholderia</taxon>
        <taxon>Burkholderia cepacia complex</taxon>
    </lineage>
</organism>
<dbReference type="EC" id="6.2.1.5" evidence="1"/>
<dbReference type="EMBL" id="CP000151">
    <property type="protein sequence ID" value="ABB09570.1"/>
    <property type="molecule type" value="Genomic_DNA"/>
</dbReference>
<dbReference type="RefSeq" id="WP_011353083.1">
    <property type="nucleotide sequence ID" value="NZ_WNDV01000046.1"/>
</dbReference>
<dbReference type="SMR" id="Q39D96"/>
<dbReference type="GeneID" id="45095859"/>
<dbReference type="KEGG" id="bur:Bcep18194_A5976"/>
<dbReference type="PATRIC" id="fig|482957.22.peg.2973"/>
<dbReference type="HOGENOM" id="CLU_037430_0_2_4"/>
<dbReference type="UniPathway" id="UPA00223">
    <property type="reaction ID" value="UER00999"/>
</dbReference>
<dbReference type="Proteomes" id="UP000002705">
    <property type="component" value="Chromosome 1"/>
</dbReference>
<dbReference type="GO" id="GO:0005829">
    <property type="term" value="C:cytosol"/>
    <property type="evidence" value="ECO:0007669"/>
    <property type="project" value="TreeGrafter"/>
</dbReference>
<dbReference type="GO" id="GO:0042709">
    <property type="term" value="C:succinate-CoA ligase complex"/>
    <property type="evidence" value="ECO:0007669"/>
    <property type="project" value="TreeGrafter"/>
</dbReference>
<dbReference type="GO" id="GO:0005524">
    <property type="term" value="F:ATP binding"/>
    <property type="evidence" value="ECO:0007669"/>
    <property type="project" value="UniProtKB-UniRule"/>
</dbReference>
<dbReference type="GO" id="GO:0000287">
    <property type="term" value="F:magnesium ion binding"/>
    <property type="evidence" value="ECO:0007669"/>
    <property type="project" value="UniProtKB-UniRule"/>
</dbReference>
<dbReference type="GO" id="GO:0004775">
    <property type="term" value="F:succinate-CoA ligase (ADP-forming) activity"/>
    <property type="evidence" value="ECO:0007669"/>
    <property type="project" value="UniProtKB-UniRule"/>
</dbReference>
<dbReference type="GO" id="GO:0004776">
    <property type="term" value="F:succinate-CoA ligase (GDP-forming) activity"/>
    <property type="evidence" value="ECO:0007669"/>
    <property type="project" value="RHEA"/>
</dbReference>
<dbReference type="GO" id="GO:0006104">
    <property type="term" value="P:succinyl-CoA metabolic process"/>
    <property type="evidence" value="ECO:0007669"/>
    <property type="project" value="TreeGrafter"/>
</dbReference>
<dbReference type="GO" id="GO:0006099">
    <property type="term" value="P:tricarboxylic acid cycle"/>
    <property type="evidence" value="ECO:0007669"/>
    <property type="project" value="UniProtKB-UniRule"/>
</dbReference>
<dbReference type="FunFam" id="3.30.1490.20:FF:000002">
    <property type="entry name" value="Succinate--CoA ligase [ADP-forming] subunit beta"/>
    <property type="match status" value="1"/>
</dbReference>
<dbReference type="FunFam" id="3.30.470.20:FF:000002">
    <property type="entry name" value="Succinate--CoA ligase [ADP-forming] subunit beta"/>
    <property type="match status" value="1"/>
</dbReference>
<dbReference type="FunFam" id="3.40.50.261:FF:000001">
    <property type="entry name" value="Succinate--CoA ligase [ADP-forming] subunit beta"/>
    <property type="match status" value="1"/>
</dbReference>
<dbReference type="Gene3D" id="3.30.1490.20">
    <property type="entry name" value="ATP-grasp fold, A domain"/>
    <property type="match status" value="1"/>
</dbReference>
<dbReference type="Gene3D" id="3.30.470.20">
    <property type="entry name" value="ATP-grasp fold, B domain"/>
    <property type="match status" value="1"/>
</dbReference>
<dbReference type="Gene3D" id="3.40.50.261">
    <property type="entry name" value="Succinyl-CoA synthetase domains"/>
    <property type="match status" value="1"/>
</dbReference>
<dbReference type="HAMAP" id="MF_00558">
    <property type="entry name" value="Succ_CoA_beta"/>
    <property type="match status" value="1"/>
</dbReference>
<dbReference type="InterPro" id="IPR011761">
    <property type="entry name" value="ATP-grasp"/>
</dbReference>
<dbReference type="InterPro" id="IPR013650">
    <property type="entry name" value="ATP-grasp_succ-CoA_synth-type"/>
</dbReference>
<dbReference type="InterPro" id="IPR013815">
    <property type="entry name" value="ATP_grasp_subdomain_1"/>
</dbReference>
<dbReference type="InterPro" id="IPR017866">
    <property type="entry name" value="Succ-CoA_synthase_bsu_CS"/>
</dbReference>
<dbReference type="InterPro" id="IPR005811">
    <property type="entry name" value="SUCC_ACL_C"/>
</dbReference>
<dbReference type="InterPro" id="IPR005809">
    <property type="entry name" value="Succ_CoA_ligase-like_bsu"/>
</dbReference>
<dbReference type="InterPro" id="IPR016102">
    <property type="entry name" value="Succinyl-CoA_synth-like"/>
</dbReference>
<dbReference type="NCBIfam" id="NF001913">
    <property type="entry name" value="PRK00696.1"/>
    <property type="match status" value="1"/>
</dbReference>
<dbReference type="NCBIfam" id="TIGR01016">
    <property type="entry name" value="sucCoAbeta"/>
    <property type="match status" value="1"/>
</dbReference>
<dbReference type="PANTHER" id="PTHR11815:SF10">
    <property type="entry name" value="SUCCINATE--COA LIGASE [GDP-FORMING] SUBUNIT BETA, MITOCHONDRIAL"/>
    <property type="match status" value="1"/>
</dbReference>
<dbReference type="PANTHER" id="PTHR11815">
    <property type="entry name" value="SUCCINYL-COA SYNTHETASE BETA CHAIN"/>
    <property type="match status" value="1"/>
</dbReference>
<dbReference type="Pfam" id="PF08442">
    <property type="entry name" value="ATP-grasp_2"/>
    <property type="match status" value="1"/>
</dbReference>
<dbReference type="Pfam" id="PF00549">
    <property type="entry name" value="Ligase_CoA"/>
    <property type="match status" value="1"/>
</dbReference>
<dbReference type="PIRSF" id="PIRSF001554">
    <property type="entry name" value="SucCS_beta"/>
    <property type="match status" value="1"/>
</dbReference>
<dbReference type="SUPFAM" id="SSF56059">
    <property type="entry name" value="Glutathione synthetase ATP-binding domain-like"/>
    <property type="match status" value="1"/>
</dbReference>
<dbReference type="SUPFAM" id="SSF52210">
    <property type="entry name" value="Succinyl-CoA synthetase domains"/>
    <property type="match status" value="1"/>
</dbReference>
<dbReference type="PROSITE" id="PS50975">
    <property type="entry name" value="ATP_GRASP"/>
    <property type="match status" value="1"/>
</dbReference>
<dbReference type="PROSITE" id="PS01217">
    <property type="entry name" value="SUCCINYL_COA_LIG_3"/>
    <property type="match status" value="1"/>
</dbReference>
<sequence>MKIHEYQGKEILRKFGVAVPRGKPAFSVDEAVKVAEELGGPVWVVKAQIHAGGRGKGGGVKVAKSIEQVREYANQILGMQLVTHQTGPEGQKVNRLMVEEGADIKQELYVSLVVDRVTQKIVLMGSSEGGMDIEEVAEKHPELIHKVIVEPSTGLLDAQADDLAAKIGVPAASIPQARAILQGLYKAFWETDASLAEINPLNVSSDGKVIALDAKFNFDSNALFRHPEIVAYRDLDEEDPAEIEASKFDLAYISLDGNIGCLVNGAGLAMATMDTIKLFGGEPANFLDVGGGATTEKVTEAFKLMLKNPDLKAILVNIFGGIMRCDVIAEGVIAGSKAVNLNVPLVVRMKGTNEDLGKKMLADSGLPIISADSMEEAAQKVVAAAAGK</sequence>
<proteinExistence type="inferred from homology"/>
<feature type="chain" id="PRO_1000082046" description="Succinate--CoA ligase [ADP-forming] subunit beta">
    <location>
        <begin position="1"/>
        <end position="388"/>
    </location>
</feature>
<feature type="domain" description="ATP-grasp" evidence="1">
    <location>
        <begin position="9"/>
        <end position="244"/>
    </location>
</feature>
<feature type="binding site" evidence="1">
    <location>
        <position position="46"/>
    </location>
    <ligand>
        <name>ATP</name>
        <dbReference type="ChEBI" id="CHEBI:30616"/>
    </ligand>
</feature>
<feature type="binding site" evidence="1">
    <location>
        <begin position="53"/>
        <end position="55"/>
    </location>
    <ligand>
        <name>ATP</name>
        <dbReference type="ChEBI" id="CHEBI:30616"/>
    </ligand>
</feature>
<feature type="binding site" evidence="1">
    <location>
        <position position="99"/>
    </location>
    <ligand>
        <name>ATP</name>
        <dbReference type="ChEBI" id="CHEBI:30616"/>
    </ligand>
</feature>
<feature type="binding site" evidence="1">
    <location>
        <position position="102"/>
    </location>
    <ligand>
        <name>ATP</name>
        <dbReference type="ChEBI" id="CHEBI:30616"/>
    </ligand>
</feature>
<feature type="binding site" evidence="1">
    <location>
        <position position="107"/>
    </location>
    <ligand>
        <name>ATP</name>
        <dbReference type="ChEBI" id="CHEBI:30616"/>
    </ligand>
</feature>
<feature type="binding site" evidence="1">
    <location>
        <position position="199"/>
    </location>
    <ligand>
        <name>Mg(2+)</name>
        <dbReference type="ChEBI" id="CHEBI:18420"/>
    </ligand>
</feature>
<feature type="binding site" evidence="1">
    <location>
        <position position="213"/>
    </location>
    <ligand>
        <name>Mg(2+)</name>
        <dbReference type="ChEBI" id="CHEBI:18420"/>
    </ligand>
</feature>
<feature type="binding site" evidence="1">
    <location>
        <position position="264"/>
    </location>
    <ligand>
        <name>substrate</name>
        <note>ligand shared with subunit alpha</note>
    </ligand>
</feature>
<feature type="binding site" evidence="1">
    <location>
        <begin position="321"/>
        <end position="323"/>
    </location>
    <ligand>
        <name>substrate</name>
        <note>ligand shared with subunit alpha</note>
    </ligand>
</feature>
<name>SUCC_BURL3</name>
<reference key="1">
    <citation type="submission" date="2005-10" db="EMBL/GenBank/DDBJ databases">
        <title>Complete sequence of chromosome 1 of Burkholderia sp. 383.</title>
        <authorList>
            <consortium name="US DOE Joint Genome Institute"/>
            <person name="Copeland A."/>
            <person name="Lucas S."/>
            <person name="Lapidus A."/>
            <person name="Barry K."/>
            <person name="Detter J.C."/>
            <person name="Glavina T."/>
            <person name="Hammon N."/>
            <person name="Israni S."/>
            <person name="Pitluck S."/>
            <person name="Chain P."/>
            <person name="Malfatti S."/>
            <person name="Shin M."/>
            <person name="Vergez L."/>
            <person name="Schmutz J."/>
            <person name="Larimer F."/>
            <person name="Land M."/>
            <person name="Kyrpides N."/>
            <person name="Lykidis A."/>
            <person name="Richardson P."/>
        </authorList>
    </citation>
    <scope>NUCLEOTIDE SEQUENCE [LARGE SCALE GENOMIC DNA]</scope>
    <source>
        <strain>ATCC 17760 / DSM 23089 / LMG 22485 / NCIMB 9086 / R18194 / 383</strain>
    </source>
</reference>
<gene>
    <name evidence="1" type="primary">sucC</name>
    <name type="ordered locus">Bcep18194_A5976</name>
</gene>
<comment type="function">
    <text evidence="1">Succinyl-CoA synthetase functions in the citric acid cycle (TCA), coupling the hydrolysis of succinyl-CoA to the synthesis of either ATP or GTP and thus represents the only step of substrate-level phosphorylation in the TCA. The beta subunit provides nucleotide specificity of the enzyme and binds the substrate succinate, while the binding sites for coenzyme A and phosphate are found in the alpha subunit.</text>
</comment>
<comment type="catalytic activity">
    <reaction evidence="1">
        <text>succinate + ATP + CoA = succinyl-CoA + ADP + phosphate</text>
        <dbReference type="Rhea" id="RHEA:17661"/>
        <dbReference type="ChEBI" id="CHEBI:30031"/>
        <dbReference type="ChEBI" id="CHEBI:30616"/>
        <dbReference type="ChEBI" id="CHEBI:43474"/>
        <dbReference type="ChEBI" id="CHEBI:57287"/>
        <dbReference type="ChEBI" id="CHEBI:57292"/>
        <dbReference type="ChEBI" id="CHEBI:456216"/>
        <dbReference type="EC" id="6.2.1.5"/>
    </reaction>
    <physiologicalReaction direction="right-to-left" evidence="1">
        <dbReference type="Rhea" id="RHEA:17663"/>
    </physiologicalReaction>
</comment>
<comment type="catalytic activity">
    <reaction evidence="1">
        <text>GTP + succinate + CoA = succinyl-CoA + GDP + phosphate</text>
        <dbReference type="Rhea" id="RHEA:22120"/>
        <dbReference type="ChEBI" id="CHEBI:30031"/>
        <dbReference type="ChEBI" id="CHEBI:37565"/>
        <dbReference type="ChEBI" id="CHEBI:43474"/>
        <dbReference type="ChEBI" id="CHEBI:57287"/>
        <dbReference type="ChEBI" id="CHEBI:57292"/>
        <dbReference type="ChEBI" id="CHEBI:58189"/>
    </reaction>
    <physiologicalReaction direction="right-to-left" evidence="1">
        <dbReference type="Rhea" id="RHEA:22122"/>
    </physiologicalReaction>
</comment>
<comment type="cofactor">
    <cofactor evidence="1">
        <name>Mg(2+)</name>
        <dbReference type="ChEBI" id="CHEBI:18420"/>
    </cofactor>
    <text evidence="1">Binds 1 Mg(2+) ion per subunit.</text>
</comment>
<comment type="pathway">
    <text evidence="1">Carbohydrate metabolism; tricarboxylic acid cycle; succinate from succinyl-CoA (ligase route): step 1/1.</text>
</comment>
<comment type="subunit">
    <text evidence="1">Heterotetramer of two alpha and two beta subunits.</text>
</comment>
<comment type="similarity">
    <text evidence="1">Belongs to the succinate/malate CoA ligase beta subunit family.</text>
</comment>
<accession>Q39D96</accession>